<feature type="signal peptide" evidence="1">
    <location>
        <begin position="1"/>
        <end position="21"/>
    </location>
</feature>
<feature type="propeptide" id="PRO_0000400520" evidence="2 3">
    <location>
        <begin position="22"/>
        <end position="48"/>
    </location>
</feature>
<feature type="peptide" id="PRO_0000400521" description="Hainantoxin-III 9" evidence="2 3">
    <location>
        <begin position="49"/>
        <end position="81"/>
    </location>
</feature>
<feature type="modified residue" description="Leucine amide" evidence="2">
    <location>
        <position position="81"/>
    </location>
</feature>
<feature type="disulfide bond" evidence="4 6">
    <location>
        <begin position="50"/>
        <end position="65"/>
    </location>
</feature>
<feature type="disulfide bond" evidence="4 6">
    <location>
        <begin position="57"/>
        <end position="70"/>
    </location>
</feature>
<feature type="disulfide bond" evidence="4 6">
    <location>
        <begin position="64"/>
        <end position="77"/>
    </location>
</feature>
<keyword id="KW-0027">Amidation</keyword>
<keyword id="KW-0903">Direct protein sequencing</keyword>
<keyword id="KW-1015">Disulfide bond</keyword>
<keyword id="KW-0872">Ion channel impairing toxin</keyword>
<keyword id="KW-0960">Knottin</keyword>
<keyword id="KW-0528">Neurotoxin</keyword>
<keyword id="KW-0638">Presynaptic neurotoxin</keyword>
<keyword id="KW-0964">Secreted</keyword>
<keyword id="KW-0732">Signal</keyword>
<keyword id="KW-0800">Toxin</keyword>
<keyword id="KW-0738">Voltage-gated sodium channel impairing toxin</keyword>
<name>H3A09_CYRHA</name>
<reference key="1">
    <citation type="journal article" date="2010" name="J. Proteome Res.">
        <title>Molecular diversification of peptide toxins from the tarantula Haplopelma hainanum (Ornithoctonus hainana) venom based on transcriptomic, peptidomic, and genomic analyses.</title>
        <authorList>
            <person name="Tang X."/>
            <person name="Zhang Y."/>
            <person name="Hu W."/>
            <person name="Xu D."/>
            <person name="Tao H."/>
            <person name="Yang X."/>
            <person name="Li Y."/>
            <person name="Jiang L."/>
            <person name="Liang S."/>
        </authorList>
    </citation>
    <scope>NUCLEOTIDE SEQUENCE [LARGE SCALE MRNA]</scope>
    <scope>PROTEIN SEQUENCE OF 49-81</scope>
    <scope>IDENTIFICATION BY MASS SPECTROMETRY</scope>
    <source>
        <tissue>Venom</tissue>
        <tissue>Venom gland</tissue>
    </source>
</reference>
<reference key="2">
    <citation type="journal article" date="2003" name="Eur. J. Pharmacol.">
        <title>Inhibition of neuronal tetrodotoxin-sensitive Na+ channels by two spider toxins: hainantoxin-III and hainantoxin-IV.</title>
        <authorList>
            <person name="Xiao Y."/>
            <person name="Liang S."/>
        </authorList>
    </citation>
    <scope>PROTEIN SEQUENCE OF 49-81</scope>
    <scope>FUNCTION</scope>
    <scope>SUBCELLULAR LOCATION</scope>
    <scope>AMIDATION AT LEU-81</scope>
    <source>
        <tissue>Venom</tissue>
    </source>
</reference>
<reference key="3">
    <citation type="submission" date="2002-10" db="UniProtKB">
        <title>Function and solution structure of hainantoxin-III, a potent neuronal TTX-sensitive sodium channel antagonist from Chinese bird spider Selenocosmia hainana.</title>
        <authorList>
            <person name="Zhu Q."/>
            <person name="Liu Z.-H."/>
            <person name="Liang S.-P."/>
        </authorList>
    </citation>
    <scope>SUBUNIT</scope>
    <scope>MASS SPECTROMETRY</scope>
</reference>
<reference key="4">
    <citation type="journal article" date="2013" name="J. Biol. Chem.">
        <title>Structure and function of hainantoxin-III, a selective antagonist of neuronal tetrodotoxin-sensitive voltage-gated sodium channels isolated from the Chinese bird spider Ornithoctonus hainana.</title>
        <authorList>
            <person name="Liu Z."/>
            <person name="Cai T."/>
            <person name="Zhu Q."/>
            <person name="Deng M."/>
            <person name="Li J."/>
            <person name="Zhou X."/>
            <person name="Zhang F."/>
            <person name="Li D."/>
            <person name="Li J."/>
            <person name="Liu Y."/>
            <person name="Hu W."/>
            <person name="Liang S."/>
        </authorList>
    </citation>
    <scope>FUNCTION</scope>
    <scope>SUBCELLULAR LOCATION</scope>
    <scope>STRUCTURE BY NMR OF 49-81</scope>
    <scope>DISULFIDE BONDS</scope>
    <source>
        <tissue>Venom</tissue>
    </source>
</reference>
<reference key="5">
    <citation type="submission" date="2007-07" db="PDB data bank">
        <title>Three dimensional solution structure of hainantoxin-III by 2D 1H-NMR.</title>
        <authorList>
            <person name="Zhu Q."/>
            <person name="Liu Z."/>
            <person name="Liang S."/>
        </authorList>
    </citation>
    <scope>STRUCTURE BY NMR OF 49-81</scope>
    <scope>DISULFIDE BONDS</scope>
</reference>
<protein>
    <recommendedName>
        <fullName evidence="7 8">Hainantoxin-III 9</fullName>
        <shortName evidence="7 8">HnTx-III</shortName>
    </recommendedName>
    <alternativeName>
        <fullName>Hainantoxin-3.9</fullName>
    </alternativeName>
    <alternativeName>
        <fullName>Mu-theraphotoxin-Hhn2a</fullName>
        <shortName>Mu-TRTX-Hhn2a</shortName>
    </alternativeName>
    <alternativeName>
        <fullName>Peptide F7-18.76</fullName>
    </alternativeName>
</protein>
<dbReference type="EMBL" id="GU293008">
    <property type="protein sequence ID" value="ADB56824.1"/>
    <property type="molecule type" value="mRNA"/>
</dbReference>
<dbReference type="SMR" id="D2Y2D1"/>
<dbReference type="ArachnoServer" id="AS000339">
    <property type="toxin name" value="mu-theraphotoxin-Hhn2a"/>
</dbReference>
<dbReference type="GO" id="GO:0005576">
    <property type="term" value="C:extracellular region"/>
    <property type="evidence" value="ECO:0007669"/>
    <property type="project" value="UniProtKB-SubCell"/>
</dbReference>
<dbReference type="GO" id="GO:0044231">
    <property type="term" value="C:host cell presynaptic membrane"/>
    <property type="evidence" value="ECO:0007669"/>
    <property type="project" value="UniProtKB-KW"/>
</dbReference>
<dbReference type="GO" id="GO:0008200">
    <property type="term" value="F:ion channel inhibitor activity"/>
    <property type="evidence" value="ECO:0007669"/>
    <property type="project" value="InterPro"/>
</dbReference>
<dbReference type="GO" id="GO:0017080">
    <property type="term" value="F:sodium channel regulator activity"/>
    <property type="evidence" value="ECO:0007669"/>
    <property type="project" value="UniProtKB-KW"/>
</dbReference>
<dbReference type="GO" id="GO:0090729">
    <property type="term" value="F:toxin activity"/>
    <property type="evidence" value="ECO:0007669"/>
    <property type="project" value="UniProtKB-KW"/>
</dbReference>
<dbReference type="InterPro" id="IPR011696">
    <property type="entry name" value="Huwentoxin-1"/>
</dbReference>
<dbReference type="InterPro" id="IPR013140">
    <property type="entry name" value="Huwentoxin_CS1"/>
</dbReference>
<dbReference type="Pfam" id="PF07740">
    <property type="entry name" value="Toxin_12"/>
    <property type="match status" value="1"/>
</dbReference>
<dbReference type="SUPFAM" id="SSF57059">
    <property type="entry name" value="omega toxin-like"/>
    <property type="match status" value="1"/>
</dbReference>
<dbReference type="PROSITE" id="PS60021">
    <property type="entry name" value="HWTX_1"/>
    <property type="match status" value="1"/>
</dbReference>
<proteinExistence type="evidence at protein level"/>
<accession>D2Y2D1</accession>
<accession>P83464</accession>
<comment type="function">
    <text evidence="4">Selective antagonist of neuronal tetrodotoxin (TTX)-sensitive voltage-gated sodium channels (IC(50)=1270 nM on Nav1.1/SCN1A, 270 nM on Nav1.2/SCN2A, 491 nM on Nav1.3/SCN3A and 232 nM on Nav1.7/SCN9A). This toxin suppress Nav1.7 current amplitude without significantly altering the activation, inactivation, and repriming kinetics. Short extreme depolarizations partially activate the toxin-bound channel, indicating voltage-dependent inhibition of this toxin. This toxin increases the deactivation of the Nav1.7 current after extreme depolarizations. The toxin-Nav1.7 complex is gradually dissociated upon prolonged strong depolarizations in a voltage-dependent manner, and the unbound toxin rebinds to Nav1.7 after a long repolarization. Moreover, analysis of chimeric channels showed that the DIIS3-S4 linker is critical for toxin binding to Nav1.7. These data are consistent with this toxin interacting with Nav1.7 site 4 and trapping the domain II voltage sensor in the closed state.</text>
</comment>
<comment type="subunit">
    <text evidence="5">Monomer.</text>
</comment>
<comment type="subcellular location">
    <subcellularLocation>
        <location evidence="2 4">Secreted</location>
    </subcellularLocation>
</comment>
<comment type="tissue specificity">
    <text evidence="10 11">Expressed by the venom gland.</text>
</comment>
<comment type="domain">
    <text evidence="4">The presence of a 'disulfide through disulfide knot' structurally defines this protein as a knottin.</text>
</comment>
<comment type="mass spectrometry"/>
<comment type="miscellaneous">
    <text evidence="2 4">Negative results: has no activity on Nav1.4, Nav1.5, Nav1.8 and Nav1.9 sodium and calcium currents.</text>
</comment>
<comment type="similarity">
    <text evidence="9">Belongs to the neurotoxin 10 (Hwtx-1) family. 15 (Hntx-3) subfamily.</text>
</comment>
<comment type="caution">
    <text evidence="9">Several genes are coding for this toxin for which the structure by NMR has been determined. The cross-references to PDB and additional information can be found in entry AC D2Y1X9.</text>
</comment>
<sequence>MKASMFLALAGLALLFVVCYASESEEKEFPIELLSKIFAVDVFKGEERGCKGFGDSCTPGKNECCPNYACSSKHKWCKVYLGK</sequence>
<organism>
    <name type="scientific">Cyriopagopus hainanus</name>
    <name type="common">Chinese bird spider</name>
    <name type="synonym">Haplopelma hainanum</name>
    <dbReference type="NCBI Taxonomy" id="209901"/>
    <lineage>
        <taxon>Eukaryota</taxon>
        <taxon>Metazoa</taxon>
        <taxon>Ecdysozoa</taxon>
        <taxon>Arthropoda</taxon>
        <taxon>Chelicerata</taxon>
        <taxon>Arachnida</taxon>
        <taxon>Araneae</taxon>
        <taxon>Mygalomorphae</taxon>
        <taxon>Theraphosidae</taxon>
        <taxon>Haplopelma</taxon>
    </lineage>
</organism>
<evidence type="ECO:0000255" key="1"/>
<evidence type="ECO:0000269" key="2">
    <source>
    </source>
</evidence>
<evidence type="ECO:0000269" key="3">
    <source>
    </source>
</evidence>
<evidence type="ECO:0000269" key="4">
    <source>
    </source>
</evidence>
<evidence type="ECO:0000269" key="5">
    <source ref="3"/>
</evidence>
<evidence type="ECO:0000269" key="6">
    <source ref="5"/>
</evidence>
<evidence type="ECO:0000303" key="7">
    <source>
    </source>
</evidence>
<evidence type="ECO:0000303" key="8">
    <source ref="5"/>
</evidence>
<evidence type="ECO:0000305" key="9"/>
<evidence type="ECO:0000305" key="10">
    <source>
    </source>
</evidence>
<evidence type="ECO:0000305" key="11">
    <source>
    </source>
</evidence>